<feature type="transit peptide" description="Mitochondrion" evidence="3">
    <location>
        <begin position="1"/>
        <end position="52"/>
    </location>
</feature>
<feature type="chain" id="PRO_0000018595" description="Uncharacterized protein At2g39795, mitochondrial">
    <location>
        <begin position="53"/>
        <end position="250"/>
    </location>
</feature>
<feature type="region of interest" description="Disordered" evidence="1">
    <location>
        <begin position="124"/>
        <end position="147"/>
    </location>
</feature>
<feature type="compositionally biased region" description="Acidic residues" evidence="1">
    <location>
        <begin position="129"/>
        <end position="141"/>
    </location>
</feature>
<name>YB95_ARATH</name>
<comment type="subcellular location">
    <subcellularLocation>
        <location evidence="2 5">Mitochondrion matrix</location>
    </subcellularLocation>
</comment>
<comment type="similarity">
    <text evidence="4">Belongs to the MAM33 family.</text>
</comment>
<dbReference type="EMBL" id="AC003000">
    <property type="protein sequence ID" value="AAM14855.1"/>
    <property type="molecule type" value="Genomic_DNA"/>
</dbReference>
<dbReference type="EMBL" id="CP002685">
    <property type="protein sequence ID" value="AEC09727.1"/>
    <property type="molecule type" value="Genomic_DNA"/>
</dbReference>
<dbReference type="EMBL" id="AY062757">
    <property type="protein sequence ID" value="AAL32835.1"/>
    <property type="molecule type" value="mRNA"/>
</dbReference>
<dbReference type="EMBL" id="AY114686">
    <property type="protein sequence ID" value="AAM48005.1"/>
    <property type="molecule type" value="mRNA"/>
</dbReference>
<dbReference type="RefSeq" id="NP_565914.1">
    <property type="nucleotide sequence ID" value="NM_129538.3"/>
</dbReference>
<dbReference type="SMR" id="Q8W487"/>
<dbReference type="BioGRID" id="3903">
    <property type="interactions" value="1"/>
</dbReference>
<dbReference type="FunCoup" id="Q8W487">
    <property type="interactions" value="1711"/>
</dbReference>
<dbReference type="STRING" id="3702.Q8W487"/>
<dbReference type="iPTMnet" id="Q8W487"/>
<dbReference type="MetOSite" id="Q8W487"/>
<dbReference type="PaxDb" id="3702-AT2G39795.1"/>
<dbReference type="ProteomicsDB" id="228635"/>
<dbReference type="EnsemblPlants" id="AT2G39795.1">
    <property type="protein sequence ID" value="AT2G39795.1"/>
    <property type="gene ID" value="AT2G39795"/>
</dbReference>
<dbReference type="GeneID" id="818565"/>
<dbReference type="Gramene" id="AT2G39795.1">
    <property type="protein sequence ID" value="AT2G39795.1"/>
    <property type="gene ID" value="AT2G39795"/>
</dbReference>
<dbReference type="KEGG" id="ath:AT2G39795"/>
<dbReference type="Araport" id="AT2G39795"/>
<dbReference type="TAIR" id="AT2G39795"/>
<dbReference type="eggNOG" id="KOG2536">
    <property type="taxonomic scope" value="Eukaryota"/>
</dbReference>
<dbReference type="HOGENOM" id="CLU_072692_1_1_1"/>
<dbReference type="InParanoid" id="Q8W487"/>
<dbReference type="OMA" id="RWLNNVK"/>
<dbReference type="OrthoDB" id="278212at2759"/>
<dbReference type="PhylomeDB" id="Q8W487"/>
<dbReference type="PRO" id="PR:Q8W487"/>
<dbReference type="Proteomes" id="UP000006548">
    <property type="component" value="Chromosome 2"/>
</dbReference>
<dbReference type="ExpressionAtlas" id="Q8W487">
    <property type="expression patterns" value="baseline and differential"/>
</dbReference>
<dbReference type="GO" id="GO:0005794">
    <property type="term" value="C:Golgi apparatus"/>
    <property type="evidence" value="ECO:0007005"/>
    <property type="project" value="TAIR"/>
</dbReference>
<dbReference type="GO" id="GO:0005759">
    <property type="term" value="C:mitochondrial matrix"/>
    <property type="evidence" value="ECO:0007669"/>
    <property type="project" value="UniProtKB-SubCell"/>
</dbReference>
<dbReference type="GO" id="GO:0005739">
    <property type="term" value="C:mitochondrion"/>
    <property type="evidence" value="ECO:0007005"/>
    <property type="project" value="TAIR"/>
</dbReference>
<dbReference type="FunFam" id="3.10.280.10:FF:000002">
    <property type="entry name" value="Mitochondrial glycoprotein family protein"/>
    <property type="match status" value="1"/>
</dbReference>
<dbReference type="Gene3D" id="3.10.280.10">
    <property type="entry name" value="Mitochondrial glycoprotein"/>
    <property type="match status" value="1"/>
</dbReference>
<dbReference type="InterPro" id="IPR003428">
    <property type="entry name" value="MAM33"/>
</dbReference>
<dbReference type="InterPro" id="IPR036561">
    <property type="entry name" value="MAM33_sf"/>
</dbReference>
<dbReference type="PANTHER" id="PTHR10826">
    <property type="entry name" value="COMPLEMENT COMPONENT 1"/>
    <property type="match status" value="1"/>
</dbReference>
<dbReference type="PANTHER" id="PTHR10826:SF41">
    <property type="entry name" value="MITOCHONDRIAL GLYCOPROTEIN FAMILY PROTEIN"/>
    <property type="match status" value="1"/>
</dbReference>
<dbReference type="Pfam" id="PF02330">
    <property type="entry name" value="MAM33"/>
    <property type="match status" value="1"/>
</dbReference>
<dbReference type="SUPFAM" id="SSF54529">
    <property type="entry name" value="Mitochondrial glycoprotein MAM33-like"/>
    <property type="match status" value="1"/>
</dbReference>
<keyword id="KW-0496">Mitochondrion</keyword>
<keyword id="KW-1185">Reference proteome</keyword>
<keyword id="KW-0809">Transit peptide</keyword>
<sequence length="250" mass="28061">MALAWCVVRRSASKFASVYGGRVRSISAVANRASLARNPSSIRPFVSRALNYSTAIDRISSEQTLIRVIDSEINSALQSDNIDSDEEMTPGSFPFRIEDKPGNQNVTLTRDYNGEHIKVVVSMPSLVSDENDDDDDDDEGPSNESSIPLVVTVTKKSGLTLEFSCMAFPDEIAIDALSVKHPGDSLEDQLANEGPDFEDLDENLKKTFYKFLEIRGVKASTTNFLHEYMTRKVNREYFLWLKNVKEFMEQ</sequence>
<organism>
    <name type="scientific">Arabidopsis thaliana</name>
    <name type="common">Mouse-ear cress</name>
    <dbReference type="NCBI Taxonomy" id="3702"/>
    <lineage>
        <taxon>Eukaryota</taxon>
        <taxon>Viridiplantae</taxon>
        <taxon>Streptophyta</taxon>
        <taxon>Embryophyta</taxon>
        <taxon>Tracheophyta</taxon>
        <taxon>Spermatophyta</taxon>
        <taxon>Magnoliopsida</taxon>
        <taxon>eudicotyledons</taxon>
        <taxon>Gunneridae</taxon>
        <taxon>Pentapetalae</taxon>
        <taxon>rosids</taxon>
        <taxon>malvids</taxon>
        <taxon>Brassicales</taxon>
        <taxon>Brassicaceae</taxon>
        <taxon>Camelineae</taxon>
        <taxon>Arabidopsis</taxon>
    </lineage>
</organism>
<evidence type="ECO:0000256" key="1">
    <source>
        <dbReference type="SAM" id="MobiDB-lite"/>
    </source>
</evidence>
<evidence type="ECO:0000269" key="2">
    <source>
    </source>
</evidence>
<evidence type="ECO:0000269" key="3">
    <source>
    </source>
</evidence>
<evidence type="ECO:0000305" key="4"/>
<evidence type="ECO:0000305" key="5">
    <source>
    </source>
</evidence>
<gene>
    <name type="ordered locus">At2g39795</name>
    <name type="ORF">T5I7.20</name>
</gene>
<reference key="1">
    <citation type="journal article" date="1999" name="Nature">
        <title>Sequence and analysis of chromosome 2 of the plant Arabidopsis thaliana.</title>
        <authorList>
            <person name="Lin X."/>
            <person name="Kaul S."/>
            <person name="Rounsley S.D."/>
            <person name="Shea T.P."/>
            <person name="Benito M.-I."/>
            <person name="Town C.D."/>
            <person name="Fujii C.Y."/>
            <person name="Mason T.M."/>
            <person name="Bowman C.L."/>
            <person name="Barnstead M.E."/>
            <person name="Feldblyum T.V."/>
            <person name="Buell C.R."/>
            <person name="Ketchum K.A."/>
            <person name="Lee J.J."/>
            <person name="Ronning C.M."/>
            <person name="Koo H.L."/>
            <person name="Moffat K.S."/>
            <person name="Cronin L.A."/>
            <person name="Shen M."/>
            <person name="Pai G."/>
            <person name="Van Aken S."/>
            <person name="Umayam L."/>
            <person name="Tallon L.J."/>
            <person name="Gill J.E."/>
            <person name="Adams M.D."/>
            <person name="Carrera A.J."/>
            <person name="Creasy T.H."/>
            <person name="Goodman H.M."/>
            <person name="Somerville C.R."/>
            <person name="Copenhaver G.P."/>
            <person name="Preuss D."/>
            <person name="Nierman W.C."/>
            <person name="White O."/>
            <person name="Eisen J.A."/>
            <person name="Salzberg S.L."/>
            <person name="Fraser C.M."/>
            <person name="Venter J.C."/>
        </authorList>
    </citation>
    <scope>NUCLEOTIDE SEQUENCE [LARGE SCALE GENOMIC DNA]</scope>
    <source>
        <strain>cv. Columbia</strain>
    </source>
</reference>
<reference key="2">
    <citation type="journal article" date="2017" name="Plant J.">
        <title>Araport11: a complete reannotation of the Arabidopsis thaliana reference genome.</title>
        <authorList>
            <person name="Cheng C.Y."/>
            <person name="Krishnakumar V."/>
            <person name="Chan A.P."/>
            <person name="Thibaud-Nissen F."/>
            <person name="Schobel S."/>
            <person name="Town C.D."/>
        </authorList>
    </citation>
    <scope>GENOME REANNOTATION</scope>
    <source>
        <strain>cv. Columbia</strain>
    </source>
</reference>
<reference key="3">
    <citation type="journal article" date="2003" name="Science">
        <title>Empirical analysis of transcriptional activity in the Arabidopsis genome.</title>
        <authorList>
            <person name="Yamada K."/>
            <person name="Lim J."/>
            <person name="Dale J.M."/>
            <person name="Chen H."/>
            <person name="Shinn P."/>
            <person name="Palm C.J."/>
            <person name="Southwick A.M."/>
            <person name="Wu H.C."/>
            <person name="Kim C.J."/>
            <person name="Nguyen M."/>
            <person name="Pham P.K."/>
            <person name="Cheuk R.F."/>
            <person name="Karlin-Newmann G."/>
            <person name="Liu S.X."/>
            <person name="Lam B."/>
            <person name="Sakano H."/>
            <person name="Wu T."/>
            <person name="Yu G."/>
            <person name="Miranda M."/>
            <person name="Quach H.L."/>
            <person name="Tripp M."/>
            <person name="Chang C.H."/>
            <person name="Lee J.M."/>
            <person name="Toriumi M.J."/>
            <person name="Chan M.M."/>
            <person name="Tang C.C."/>
            <person name="Onodera C.S."/>
            <person name="Deng J.M."/>
            <person name="Akiyama K."/>
            <person name="Ansari Y."/>
            <person name="Arakawa T."/>
            <person name="Banh J."/>
            <person name="Banno F."/>
            <person name="Bowser L."/>
            <person name="Brooks S.Y."/>
            <person name="Carninci P."/>
            <person name="Chao Q."/>
            <person name="Choy N."/>
            <person name="Enju A."/>
            <person name="Goldsmith A.D."/>
            <person name="Gurjal M."/>
            <person name="Hansen N.F."/>
            <person name="Hayashizaki Y."/>
            <person name="Johnson-Hopson C."/>
            <person name="Hsuan V.W."/>
            <person name="Iida K."/>
            <person name="Karnes M."/>
            <person name="Khan S."/>
            <person name="Koesema E."/>
            <person name="Ishida J."/>
            <person name="Jiang P.X."/>
            <person name="Jones T."/>
            <person name="Kawai J."/>
            <person name="Kamiya A."/>
            <person name="Meyers C."/>
            <person name="Nakajima M."/>
            <person name="Narusaka M."/>
            <person name="Seki M."/>
            <person name="Sakurai T."/>
            <person name="Satou M."/>
            <person name="Tamse R."/>
            <person name="Vaysberg M."/>
            <person name="Wallender E.K."/>
            <person name="Wong C."/>
            <person name="Yamamura Y."/>
            <person name="Yuan S."/>
            <person name="Shinozaki K."/>
            <person name="Davis R.W."/>
            <person name="Theologis A."/>
            <person name="Ecker J.R."/>
        </authorList>
    </citation>
    <scope>NUCLEOTIDE SEQUENCE [LARGE SCALE MRNA]</scope>
    <source>
        <strain>cv. Columbia</strain>
    </source>
</reference>
<reference key="4">
    <citation type="journal article" date="2004" name="Plant Cell">
        <title>Experimental analysis of the Arabidopsis mitochondrial proteome highlights signaling and regulatory components, provides assessment of targeting prediction programs, and indicates plant-specific mitochondrial proteins.</title>
        <authorList>
            <person name="Heazlewood J.L."/>
            <person name="Tonti-Filippini J.S."/>
            <person name="Gout A.M."/>
            <person name="Day D.A."/>
            <person name="Whelan J."/>
            <person name="Millar A.H."/>
        </authorList>
    </citation>
    <scope>IDENTIFICATION BY MASS SPECTROMETRY</scope>
    <scope>SUBCELLULAR LOCATION [LARGE SCALE ANALYSIS]</scope>
    <source>
        <strain>cv. Landsberg erecta</strain>
    </source>
</reference>
<reference key="5">
    <citation type="journal article" date="2015" name="J. Exp. Bot.">
        <title>Identification of cleavage sites and substrate proteins for two mitochondrial intermediate peptidases in Arabidopsis thaliana.</title>
        <authorList>
            <person name="Carrie C."/>
            <person name="Venne A.S."/>
            <person name="Zahedi R.P."/>
            <person name="Soll J."/>
        </authorList>
    </citation>
    <scope>IDENTIFICATION BY MASS SPECTROMETRY</scope>
    <scope>CLEAVAGE OF TRANSIT PEPTIDE AFTER TYR-52</scope>
</reference>
<protein>
    <recommendedName>
        <fullName>Uncharacterized protein At2g39795, mitochondrial</fullName>
    </recommendedName>
</protein>
<proteinExistence type="evidence at protein level"/>
<accession>Q8W487</accession>